<name>RS7_CLOB6</name>
<accession>C3KVQ5</accession>
<comment type="function">
    <text evidence="1">One of the primary rRNA binding proteins, it binds directly to 16S rRNA where it nucleates assembly of the head domain of the 30S subunit. Is located at the subunit interface close to the decoding center, probably blocks exit of the E-site tRNA.</text>
</comment>
<comment type="subunit">
    <text evidence="1">Part of the 30S ribosomal subunit. Contacts proteins S9 and S11.</text>
</comment>
<comment type="similarity">
    <text evidence="1">Belongs to the universal ribosomal protein uS7 family.</text>
</comment>
<organism>
    <name type="scientific">Clostridium botulinum (strain 657 / Type Ba4)</name>
    <dbReference type="NCBI Taxonomy" id="515621"/>
    <lineage>
        <taxon>Bacteria</taxon>
        <taxon>Bacillati</taxon>
        <taxon>Bacillota</taxon>
        <taxon>Clostridia</taxon>
        <taxon>Eubacteriales</taxon>
        <taxon>Clostridiaceae</taxon>
        <taxon>Clostridium</taxon>
    </lineage>
</organism>
<dbReference type="EMBL" id="CP001083">
    <property type="protein sequence ID" value="ACQ53892.1"/>
    <property type="molecule type" value="Genomic_DNA"/>
</dbReference>
<dbReference type="RefSeq" id="WP_003360190.1">
    <property type="nucleotide sequence ID" value="NC_012658.1"/>
</dbReference>
<dbReference type="SMR" id="C3KVQ5"/>
<dbReference type="KEGG" id="cbi:CLJ_B3793"/>
<dbReference type="HOGENOM" id="CLU_072226_1_1_9"/>
<dbReference type="Proteomes" id="UP000002333">
    <property type="component" value="Chromosome"/>
</dbReference>
<dbReference type="GO" id="GO:0015935">
    <property type="term" value="C:small ribosomal subunit"/>
    <property type="evidence" value="ECO:0007669"/>
    <property type="project" value="InterPro"/>
</dbReference>
<dbReference type="GO" id="GO:0019843">
    <property type="term" value="F:rRNA binding"/>
    <property type="evidence" value="ECO:0007669"/>
    <property type="project" value="UniProtKB-UniRule"/>
</dbReference>
<dbReference type="GO" id="GO:0003735">
    <property type="term" value="F:structural constituent of ribosome"/>
    <property type="evidence" value="ECO:0007669"/>
    <property type="project" value="InterPro"/>
</dbReference>
<dbReference type="GO" id="GO:0000049">
    <property type="term" value="F:tRNA binding"/>
    <property type="evidence" value="ECO:0007669"/>
    <property type="project" value="UniProtKB-UniRule"/>
</dbReference>
<dbReference type="GO" id="GO:0006412">
    <property type="term" value="P:translation"/>
    <property type="evidence" value="ECO:0007669"/>
    <property type="project" value="UniProtKB-UniRule"/>
</dbReference>
<dbReference type="CDD" id="cd14869">
    <property type="entry name" value="uS7_Bacteria"/>
    <property type="match status" value="1"/>
</dbReference>
<dbReference type="FunFam" id="1.10.455.10:FF:000001">
    <property type="entry name" value="30S ribosomal protein S7"/>
    <property type="match status" value="1"/>
</dbReference>
<dbReference type="Gene3D" id="1.10.455.10">
    <property type="entry name" value="Ribosomal protein S7 domain"/>
    <property type="match status" value="1"/>
</dbReference>
<dbReference type="HAMAP" id="MF_00480_B">
    <property type="entry name" value="Ribosomal_uS7_B"/>
    <property type="match status" value="1"/>
</dbReference>
<dbReference type="InterPro" id="IPR000235">
    <property type="entry name" value="Ribosomal_uS7"/>
</dbReference>
<dbReference type="InterPro" id="IPR005717">
    <property type="entry name" value="Ribosomal_uS7_bac/org-type"/>
</dbReference>
<dbReference type="InterPro" id="IPR020606">
    <property type="entry name" value="Ribosomal_uS7_CS"/>
</dbReference>
<dbReference type="InterPro" id="IPR023798">
    <property type="entry name" value="Ribosomal_uS7_dom"/>
</dbReference>
<dbReference type="InterPro" id="IPR036823">
    <property type="entry name" value="Ribosomal_uS7_dom_sf"/>
</dbReference>
<dbReference type="NCBIfam" id="TIGR01029">
    <property type="entry name" value="rpsG_bact"/>
    <property type="match status" value="1"/>
</dbReference>
<dbReference type="PANTHER" id="PTHR11205">
    <property type="entry name" value="RIBOSOMAL PROTEIN S7"/>
    <property type="match status" value="1"/>
</dbReference>
<dbReference type="Pfam" id="PF00177">
    <property type="entry name" value="Ribosomal_S7"/>
    <property type="match status" value="1"/>
</dbReference>
<dbReference type="PIRSF" id="PIRSF002122">
    <property type="entry name" value="RPS7p_RPS7a_RPS5e_RPS7o"/>
    <property type="match status" value="1"/>
</dbReference>
<dbReference type="SUPFAM" id="SSF47973">
    <property type="entry name" value="Ribosomal protein S7"/>
    <property type="match status" value="1"/>
</dbReference>
<dbReference type="PROSITE" id="PS00052">
    <property type="entry name" value="RIBOSOMAL_S7"/>
    <property type="match status" value="1"/>
</dbReference>
<sequence length="156" mass="17686">MPRKGHIAKRDVLPDPLYNSKVVTKLINSIMLDGKKGVAQKICYDAFEIIAEKSGKDAMEVFETAMNNIMPLLEVKARRIGGATYQVPIEVRPERRQTLGIRWMLIAARKRGERSMRERLAGELLDASNNTGAAVKKREDTHKMAEANKAFAHYRY</sequence>
<evidence type="ECO:0000255" key="1">
    <source>
        <dbReference type="HAMAP-Rule" id="MF_00480"/>
    </source>
</evidence>
<evidence type="ECO:0000305" key="2"/>
<proteinExistence type="inferred from homology"/>
<gene>
    <name evidence="1" type="primary">rpsG</name>
    <name type="ordered locus">CLJ_B3793</name>
</gene>
<protein>
    <recommendedName>
        <fullName evidence="1">Small ribosomal subunit protein uS7</fullName>
    </recommendedName>
    <alternativeName>
        <fullName evidence="2">30S ribosomal protein S7</fullName>
    </alternativeName>
</protein>
<reference key="1">
    <citation type="submission" date="2008-05" db="EMBL/GenBank/DDBJ databases">
        <title>Genome sequence of Clostridium botulinum Ba4 strain 657.</title>
        <authorList>
            <person name="Shrivastava S."/>
            <person name="Brown J.L."/>
            <person name="Bruce D."/>
            <person name="Detter C."/>
            <person name="Munk C."/>
            <person name="Smith L.A."/>
            <person name="Smith T.J."/>
            <person name="Sutton G."/>
            <person name="Brettin T.S."/>
        </authorList>
    </citation>
    <scope>NUCLEOTIDE SEQUENCE [LARGE SCALE GENOMIC DNA]</scope>
    <source>
        <strain>657 / Type Ba4</strain>
    </source>
</reference>
<feature type="chain" id="PRO_1000206395" description="Small ribosomal subunit protein uS7">
    <location>
        <begin position="1"/>
        <end position="156"/>
    </location>
</feature>
<keyword id="KW-0687">Ribonucleoprotein</keyword>
<keyword id="KW-0689">Ribosomal protein</keyword>
<keyword id="KW-0694">RNA-binding</keyword>
<keyword id="KW-0699">rRNA-binding</keyword>
<keyword id="KW-0820">tRNA-binding</keyword>